<gene>
    <name evidence="1" type="primary">SNX4</name>
</gene>
<sequence length="450" mass="52194">MEQAAPDPERLWQPAPLEPLSHPDAGLESMVGEETKGARDEGPGDGTMTENNFSLKKIEISVSEAEKRTGRNAMNMQETYTAYLIETRSVEHNDGQSVLTDSLWRRYSEFELLRNYLLVYYPHIVVPPLPEKRAEFVWHKLSADNMDPDFVERRRIGLENFLLRVASHPILCRDKIFYLFLTQEGNWKETVNETGFQLKADSRLKALNATFRVKNPDKRFIELKHYSDELQSVISHLLRVRARVADRLYGVYKVHGNYGRVFSEWSAIEKEMGDGLQSAGHHMDVYASSIDDILEDEEHYADQLKEYLFYAEALRAVCRKHELMQYDLEMAAQDLASKKQQCEELATGTVRTFSLKGMTTKLFGQETPEQREARIKMLEEQIKEGEQQLKSKNLEGREFVRNAWADIERFKEQKNHDLKEALISYAVMQISMCKKGIQVWTNAKECFSKM</sequence>
<evidence type="ECO:0000250" key="1">
    <source>
        <dbReference type="UniProtKB" id="O95219"/>
    </source>
</evidence>
<evidence type="ECO:0000250" key="2">
    <source>
        <dbReference type="UniProtKB" id="Q3UR97"/>
    </source>
</evidence>
<evidence type="ECO:0000250" key="3">
    <source>
        <dbReference type="UniProtKB" id="Q6P4T1"/>
    </source>
</evidence>
<evidence type="ECO:0000250" key="4">
    <source>
        <dbReference type="UniProtKB" id="Q96L94"/>
    </source>
</evidence>
<evidence type="ECO:0000255" key="5">
    <source>
        <dbReference type="PROSITE-ProRule" id="PRU00147"/>
    </source>
</evidence>
<evidence type="ECO:0000256" key="6">
    <source>
        <dbReference type="SAM" id="MobiDB-lite"/>
    </source>
</evidence>
<evidence type="ECO:0000305" key="7"/>
<protein>
    <recommendedName>
        <fullName evidence="1">Sorting nexin-4</fullName>
    </recommendedName>
</protein>
<proteinExistence type="evidence at transcript level"/>
<comment type="function">
    <text evidence="1">Involved in the regulation of endocytosis and in several stages of intracellular trafficking. Plays a role in recycling endocytosed transferrin receptor and prevent its degradation. Involved in autophagosome assembly by regulating trafficking and recycling of phospholipid scramblase ATG9A.</text>
</comment>
<comment type="subunit">
    <text evidence="1">Heterodimer; heterodimerizes with SNX7 or SNX30. Interacts with WWC1/KIBRA. Identified in a complex with WWC1/KIBRA and dynein components DYNLL1 and DYNC1I2. Interacts with BIN1.</text>
</comment>
<comment type="subcellular location">
    <subcellularLocation>
        <location evidence="1">Early endosome</location>
    </subcellularLocation>
    <subcellularLocation>
        <location evidence="1">Early endosome membrane</location>
        <topology evidence="1">Peripheral membrane protein</topology>
        <orientation evidence="1">Cytoplasmic side</orientation>
    </subcellularLocation>
    <text evidence="1">Also detected on a juxtanuclear endocytic recycling compartment (ERC).</text>
</comment>
<comment type="domain">
    <text evidence="4">The PX domain binds phosphatidylinositol 3-phosphate which is necessary for peripheral membrane localization.</text>
</comment>
<comment type="similarity">
    <text evidence="7">Belongs to the sorting nexin family.</text>
</comment>
<name>SNX4_BOVIN</name>
<keyword id="KW-0007">Acetylation</keyword>
<keyword id="KW-0967">Endosome</keyword>
<keyword id="KW-0446">Lipid-binding</keyword>
<keyword id="KW-0472">Membrane</keyword>
<keyword id="KW-0653">Protein transport</keyword>
<keyword id="KW-1185">Reference proteome</keyword>
<keyword id="KW-0813">Transport</keyword>
<accession>A1A4L0</accession>
<organism>
    <name type="scientific">Bos taurus</name>
    <name type="common">Bovine</name>
    <dbReference type="NCBI Taxonomy" id="9913"/>
    <lineage>
        <taxon>Eukaryota</taxon>
        <taxon>Metazoa</taxon>
        <taxon>Chordata</taxon>
        <taxon>Craniata</taxon>
        <taxon>Vertebrata</taxon>
        <taxon>Euteleostomi</taxon>
        <taxon>Mammalia</taxon>
        <taxon>Eutheria</taxon>
        <taxon>Laurasiatheria</taxon>
        <taxon>Artiodactyla</taxon>
        <taxon>Ruminantia</taxon>
        <taxon>Pecora</taxon>
        <taxon>Bovidae</taxon>
        <taxon>Bovinae</taxon>
        <taxon>Bos</taxon>
    </lineage>
</organism>
<reference key="1">
    <citation type="submission" date="2006-10" db="EMBL/GenBank/DDBJ databases">
        <authorList>
            <consortium name="NIH - Mammalian Gene Collection (MGC) project"/>
        </authorList>
    </citation>
    <scope>NUCLEOTIDE SEQUENCE [LARGE SCALE MRNA]</scope>
    <source>
        <strain>Hereford</strain>
        <tissue>Hypothalamus</tissue>
    </source>
</reference>
<feature type="chain" id="PRO_0000290184" description="Sorting nexin-4">
    <location>
        <begin position="1"/>
        <end position="450"/>
    </location>
</feature>
<feature type="domain" description="PX" evidence="5">
    <location>
        <begin position="61"/>
        <end position="187"/>
    </location>
</feature>
<feature type="region of interest" description="Disordered" evidence="6">
    <location>
        <begin position="1"/>
        <end position="53"/>
    </location>
</feature>
<feature type="compositionally biased region" description="Basic and acidic residues" evidence="6">
    <location>
        <begin position="33"/>
        <end position="42"/>
    </location>
</feature>
<feature type="binding site" evidence="2">
    <location>
        <position position="106"/>
    </location>
    <ligand>
        <name>a 1,2-diacyl-sn-glycero-3-phospho-(1D-myo-inositol-3-phosphate)</name>
        <dbReference type="ChEBI" id="CHEBI:58088"/>
    </ligand>
</feature>
<feature type="binding site" evidence="4">
    <location>
        <position position="108"/>
    </location>
    <ligand>
        <name>a 1,2-diacyl-sn-glycero-3-phospho-(1D-myo-inositol-3-phosphate)</name>
        <dbReference type="ChEBI" id="CHEBI:58088"/>
    </ligand>
</feature>
<feature type="binding site" evidence="4">
    <location>
        <position position="132"/>
    </location>
    <ligand>
        <name>a 1,2-diacyl-sn-glycero-3-phospho-(1D-myo-inositol-3-phosphate)</name>
        <dbReference type="ChEBI" id="CHEBI:58088"/>
    </ligand>
</feature>
<feature type="binding site" evidence="3">
    <location>
        <position position="154"/>
    </location>
    <ligand>
        <name>a 1,2-diacyl-sn-glycero-3-phospho-(1D-myo-inositol-3-phosphate)</name>
        <dbReference type="ChEBI" id="CHEBI:58088"/>
    </ligand>
</feature>
<feature type="modified residue" description="N-acetylmethionine" evidence="1">
    <location>
        <position position="1"/>
    </location>
</feature>
<dbReference type="EMBL" id="BC126650">
    <property type="protein sequence ID" value="AAI26651.1"/>
    <property type="molecule type" value="mRNA"/>
</dbReference>
<dbReference type="RefSeq" id="NP_001073750.1">
    <property type="nucleotide sequence ID" value="NM_001080281.2"/>
</dbReference>
<dbReference type="SMR" id="A1A4L0"/>
<dbReference type="FunCoup" id="A1A4L0">
    <property type="interactions" value="2036"/>
</dbReference>
<dbReference type="STRING" id="9913.ENSBTAP00000015120"/>
<dbReference type="PaxDb" id="9913-ENSBTAP00000015120"/>
<dbReference type="Ensembl" id="ENSBTAT00000015120.6">
    <property type="protein sequence ID" value="ENSBTAP00000015120.5"/>
    <property type="gene ID" value="ENSBTAG00000011383.7"/>
</dbReference>
<dbReference type="GeneID" id="519597"/>
<dbReference type="KEGG" id="bta:519597"/>
<dbReference type="CTD" id="8723"/>
<dbReference type="VEuPathDB" id="HostDB:ENSBTAG00000011383"/>
<dbReference type="VGNC" id="VGNC:35111">
    <property type="gene designation" value="SNX4"/>
</dbReference>
<dbReference type="eggNOG" id="KOG2273">
    <property type="taxonomic scope" value="Eukaryota"/>
</dbReference>
<dbReference type="GeneTree" id="ENSGT00930000151029"/>
<dbReference type="HOGENOM" id="CLU_057138_0_0_1"/>
<dbReference type="InParanoid" id="A1A4L0"/>
<dbReference type="OMA" id="LQKSGHY"/>
<dbReference type="OrthoDB" id="289314at2759"/>
<dbReference type="TreeFam" id="TF328543"/>
<dbReference type="Proteomes" id="UP000009136">
    <property type="component" value="Chromosome 1"/>
</dbReference>
<dbReference type="Bgee" id="ENSBTAG00000011383">
    <property type="expression patterns" value="Expressed in caput epididymis and 111 other cell types or tissues"/>
</dbReference>
<dbReference type="GO" id="GO:0005868">
    <property type="term" value="C:cytoplasmic dynein complex"/>
    <property type="evidence" value="ECO:0000250"/>
    <property type="project" value="UniProtKB"/>
</dbReference>
<dbReference type="GO" id="GO:0005769">
    <property type="term" value="C:early endosome"/>
    <property type="evidence" value="ECO:0000250"/>
    <property type="project" value="UniProtKB"/>
</dbReference>
<dbReference type="GO" id="GO:0031901">
    <property type="term" value="C:early endosome membrane"/>
    <property type="evidence" value="ECO:0000250"/>
    <property type="project" value="UniProtKB"/>
</dbReference>
<dbReference type="GO" id="GO:0005886">
    <property type="term" value="C:plasma membrane"/>
    <property type="evidence" value="ECO:0000318"/>
    <property type="project" value="GO_Central"/>
</dbReference>
<dbReference type="GO" id="GO:0031201">
    <property type="term" value="C:SNARE complex"/>
    <property type="evidence" value="ECO:0000318"/>
    <property type="project" value="GO_Central"/>
</dbReference>
<dbReference type="GO" id="GO:0035091">
    <property type="term" value="F:phosphatidylinositol binding"/>
    <property type="evidence" value="ECO:0000250"/>
    <property type="project" value="UniProtKB"/>
</dbReference>
<dbReference type="GO" id="GO:0032266">
    <property type="term" value="F:phosphatidylinositol-3-phosphate binding"/>
    <property type="evidence" value="ECO:0000250"/>
    <property type="project" value="UniProtKB"/>
</dbReference>
<dbReference type="GO" id="GO:0032456">
    <property type="term" value="P:endocytic recycling"/>
    <property type="evidence" value="ECO:0000250"/>
    <property type="project" value="UniProtKB"/>
</dbReference>
<dbReference type="GO" id="GO:2000786">
    <property type="term" value="P:positive regulation of autophagosome assembly"/>
    <property type="evidence" value="ECO:0000250"/>
    <property type="project" value="UniProtKB"/>
</dbReference>
<dbReference type="GO" id="GO:0015031">
    <property type="term" value="P:protein transport"/>
    <property type="evidence" value="ECO:0000250"/>
    <property type="project" value="UniProtKB"/>
</dbReference>
<dbReference type="CDD" id="cd07622">
    <property type="entry name" value="BAR_SNX4"/>
    <property type="match status" value="1"/>
</dbReference>
<dbReference type="CDD" id="cd06864">
    <property type="entry name" value="PX_SNX4"/>
    <property type="match status" value="1"/>
</dbReference>
<dbReference type="FunFam" id="1.20.1270.60:FF:000035">
    <property type="entry name" value="Sorting nexin 4"/>
    <property type="match status" value="1"/>
</dbReference>
<dbReference type="FunFam" id="3.30.1520.10:FF:000031">
    <property type="entry name" value="Sorting nexin 4"/>
    <property type="match status" value="1"/>
</dbReference>
<dbReference type="Gene3D" id="1.20.1270.60">
    <property type="entry name" value="Arfaptin homology (AH) domain/BAR domain"/>
    <property type="match status" value="1"/>
</dbReference>
<dbReference type="Gene3D" id="3.30.1520.10">
    <property type="entry name" value="Phox-like domain"/>
    <property type="match status" value="1"/>
</dbReference>
<dbReference type="InterPro" id="IPR027267">
    <property type="entry name" value="AH/BAR_dom_sf"/>
</dbReference>
<dbReference type="InterPro" id="IPR001683">
    <property type="entry name" value="PX_dom"/>
</dbReference>
<dbReference type="InterPro" id="IPR036871">
    <property type="entry name" value="PX_dom_sf"/>
</dbReference>
<dbReference type="InterPro" id="IPR034902">
    <property type="entry name" value="PX_SNX4"/>
</dbReference>
<dbReference type="InterPro" id="IPR034783">
    <property type="entry name" value="SNX4"/>
</dbReference>
<dbReference type="InterPro" id="IPR037430">
    <property type="entry name" value="SNX4_BAR"/>
</dbReference>
<dbReference type="PANTHER" id="PTHR46596">
    <property type="entry name" value="SORTING NEXIN-4"/>
    <property type="match status" value="1"/>
</dbReference>
<dbReference type="PANTHER" id="PTHR46596:SF1">
    <property type="entry name" value="SORTING NEXIN-4"/>
    <property type="match status" value="1"/>
</dbReference>
<dbReference type="Pfam" id="PF00787">
    <property type="entry name" value="PX"/>
    <property type="match status" value="1"/>
</dbReference>
<dbReference type="SMART" id="SM00312">
    <property type="entry name" value="PX"/>
    <property type="match status" value="1"/>
</dbReference>
<dbReference type="SUPFAM" id="SSF64268">
    <property type="entry name" value="PX domain"/>
    <property type="match status" value="1"/>
</dbReference>
<dbReference type="PROSITE" id="PS50195">
    <property type="entry name" value="PX"/>
    <property type="match status" value="1"/>
</dbReference>